<gene>
    <name evidence="1" type="primary">ispG</name>
    <name type="ordered locus">Aflv_0872</name>
</gene>
<dbReference type="EC" id="1.17.7.3" evidence="1"/>
<dbReference type="EMBL" id="CP000922">
    <property type="protein sequence ID" value="ACJ33250.1"/>
    <property type="molecule type" value="Genomic_DNA"/>
</dbReference>
<dbReference type="RefSeq" id="WP_006317886.1">
    <property type="nucleotide sequence ID" value="NC_011567.1"/>
</dbReference>
<dbReference type="SMR" id="B7GH89"/>
<dbReference type="STRING" id="491915.Aflv_0872"/>
<dbReference type="GeneID" id="7037129"/>
<dbReference type="KEGG" id="afl:Aflv_0872"/>
<dbReference type="eggNOG" id="COG0821">
    <property type="taxonomic scope" value="Bacteria"/>
</dbReference>
<dbReference type="HOGENOM" id="CLU_042258_0_0_9"/>
<dbReference type="UniPathway" id="UPA00056">
    <property type="reaction ID" value="UER00096"/>
</dbReference>
<dbReference type="Proteomes" id="UP000000742">
    <property type="component" value="Chromosome"/>
</dbReference>
<dbReference type="GO" id="GO:0051539">
    <property type="term" value="F:4 iron, 4 sulfur cluster binding"/>
    <property type="evidence" value="ECO:0007669"/>
    <property type="project" value="UniProtKB-UniRule"/>
</dbReference>
<dbReference type="GO" id="GO:0046429">
    <property type="term" value="F:4-hydroxy-3-methylbut-2-en-1-yl diphosphate synthase activity (ferredoxin)"/>
    <property type="evidence" value="ECO:0007669"/>
    <property type="project" value="UniProtKB-UniRule"/>
</dbReference>
<dbReference type="GO" id="GO:0141197">
    <property type="term" value="F:4-hydroxy-3-methylbut-2-enyl-diphosphate synthase activity (flavodoxin)"/>
    <property type="evidence" value="ECO:0007669"/>
    <property type="project" value="UniProtKB-EC"/>
</dbReference>
<dbReference type="GO" id="GO:0005506">
    <property type="term" value="F:iron ion binding"/>
    <property type="evidence" value="ECO:0007669"/>
    <property type="project" value="InterPro"/>
</dbReference>
<dbReference type="GO" id="GO:0019288">
    <property type="term" value="P:isopentenyl diphosphate biosynthetic process, methylerythritol 4-phosphate pathway"/>
    <property type="evidence" value="ECO:0007669"/>
    <property type="project" value="UniProtKB-UniRule"/>
</dbReference>
<dbReference type="GO" id="GO:0016114">
    <property type="term" value="P:terpenoid biosynthetic process"/>
    <property type="evidence" value="ECO:0007669"/>
    <property type="project" value="InterPro"/>
</dbReference>
<dbReference type="FunFam" id="3.20.20.20:FF:000001">
    <property type="entry name" value="4-hydroxy-3-methylbut-2-en-1-yl diphosphate synthase (flavodoxin)"/>
    <property type="match status" value="1"/>
</dbReference>
<dbReference type="FunFam" id="3.30.413.10:FF:000005">
    <property type="entry name" value="4-hydroxy-3-methylbut-2-en-1-yl diphosphate synthase (flavodoxin)"/>
    <property type="match status" value="1"/>
</dbReference>
<dbReference type="Gene3D" id="3.20.20.20">
    <property type="entry name" value="Dihydropteroate synthase-like"/>
    <property type="match status" value="1"/>
</dbReference>
<dbReference type="Gene3D" id="3.30.413.10">
    <property type="entry name" value="Sulfite Reductase Hemoprotein, domain 1"/>
    <property type="match status" value="1"/>
</dbReference>
<dbReference type="HAMAP" id="MF_00159">
    <property type="entry name" value="IspG"/>
    <property type="match status" value="1"/>
</dbReference>
<dbReference type="InterPro" id="IPR011005">
    <property type="entry name" value="Dihydropteroate_synth-like_sf"/>
</dbReference>
<dbReference type="InterPro" id="IPR016425">
    <property type="entry name" value="IspG_bac"/>
</dbReference>
<dbReference type="InterPro" id="IPR004588">
    <property type="entry name" value="IspG_bac-typ"/>
</dbReference>
<dbReference type="InterPro" id="IPR045854">
    <property type="entry name" value="NO2/SO3_Rdtase_4Fe4S_sf"/>
</dbReference>
<dbReference type="NCBIfam" id="TIGR00612">
    <property type="entry name" value="ispG_gcpE"/>
    <property type="match status" value="1"/>
</dbReference>
<dbReference type="NCBIfam" id="NF001540">
    <property type="entry name" value="PRK00366.1"/>
    <property type="match status" value="1"/>
</dbReference>
<dbReference type="PANTHER" id="PTHR30454">
    <property type="entry name" value="4-HYDROXY-3-METHYLBUT-2-EN-1-YL DIPHOSPHATE SYNTHASE"/>
    <property type="match status" value="1"/>
</dbReference>
<dbReference type="PANTHER" id="PTHR30454:SF0">
    <property type="entry name" value="4-HYDROXY-3-METHYLBUT-2-EN-1-YL DIPHOSPHATE SYNTHASE (FERREDOXIN), CHLOROPLASTIC"/>
    <property type="match status" value="1"/>
</dbReference>
<dbReference type="Pfam" id="PF04551">
    <property type="entry name" value="GcpE"/>
    <property type="match status" value="1"/>
</dbReference>
<dbReference type="PIRSF" id="PIRSF004640">
    <property type="entry name" value="IspG"/>
    <property type="match status" value="1"/>
</dbReference>
<dbReference type="SUPFAM" id="SSF51717">
    <property type="entry name" value="Dihydropteroate synthetase-like"/>
    <property type="match status" value="1"/>
</dbReference>
<dbReference type="SUPFAM" id="SSF56014">
    <property type="entry name" value="Nitrite and sulphite reductase 4Fe-4S domain-like"/>
    <property type="match status" value="1"/>
</dbReference>
<proteinExistence type="inferred from homology"/>
<feature type="chain" id="PRO_1000118161" description="4-hydroxy-3-methylbut-2-en-1-yl diphosphate synthase (flavodoxin)">
    <location>
        <begin position="1"/>
        <end position="364"/>
    </location>
</feature>
<feature type="binding site" evidence="1">
    <location>
        <position position="268"/>
    </location>
    <ligand>
        <name>[4Fe-4S] cluster</name>
        <dbReference type="ChEBI" id="CHEBI:49883"/>
    </ligand>
</feature>
<feature type="binding site" evidence="1">
    <location>
        <position position="271"/>
    </location>
    <ligand>
        <name>[4Fe-4S] cluster</name>
        <dbReference type="ChEBI" id="CHEBI:49883"/>
    </ligand>
</feature>
<feature type="binding site" evidence="1">
    <location>
        <position position="303"/>
    </location>
    <ligand>
        <name>[4Fe-4S] cluster</name>
        <dbReference type="ChEBI" id="CHEBI:49883"/>
    </ligand>
</feature>
<feature type="binding site" evidence="1">
    <location>
        <position position="310"/>
    </location>
    <ligand>
        <name>[4Fe-4S] cluster</name>
        <dbReference type="ChEBI" id="CHEBI:49883"/>
    </ligand>
</feature>
<accession>B7GH89</accession>
<comment type="function">
    <text evidence="1">Converts 2C-methyl-D-erythritol 2,4-cyclodiphosphate (ME-2,4cPP) into 1-hydroxy-2-methyl-2-(E)-butenyl 4-diphosphate.</text>
</comment>
<comment type="catalytic activity">
    <reaction evidence="1">
        <text>(2E)-4-hydroxy-3-methylbut-2-enyl diphosphate + oxidized [flavodoxin] + H2O + 2 H(+) = 2-C-methyl-D-erythritol 2,4-cyclic diphosphate + reduced [flavodoxin]</text>
        <dbReference type="Rhea" id="RHEA:43604"/>
        <dbReference type="Rhea" id="RHEA-COMP:10622"/>
        <dbReference type="Rhea" id="RHEA-COMP:10623"/>
        <dbReference type="ChEBI" id="CHEBI:15377"/>
        <dbReference type="ChEBI" id="CHEBI:15378"/>
        <dbReference type="ChEBI" id="CHEBI:57618"/>
        <dbReference type="ChEBI" id="CHEBI:58210"/>
        <dbReference type="ChEBI" id="CHEBI:58483"/>
        <dbReference type="ChEBI" id="CHEBI:128753"/>
        <dbReference type="EC" id="1.17.7.3"/>
    </reaction>
</comment>
<comment type="cofactor">
    <cofactor evidence="1">
        <name>[4Fe-4S] cluster</name>
        <dbReference type="ChEBI" id="CHEBI:49883"/>
    </cofactor>
    <text evidence="1">Binds 1 [4Fe-4S] cluster.</text>
</comment>
<comment type="pathway">
    <text evidence="1">Isoprenoid biosynthesis; isopentenyl diphosphate biosynthesis via DXP pathway; isopentenyl diphosphate from 1-deoxy-D-xylulose 5-phosphate: step 5/6.</text>
</comment>
<comment type="similarity">
    <text evidence="1">Belongs to the IspG family.</text>
</comment>
<reference key="1">
    <citation type="journal article" date="2008" name="Genome Biol.">
        <title>Encapsulated in silica: genome, proteome and physiology of the thermophilic bacterium Anoxybacillus flavithermus WK1.</title>
        <authorList>
            <person name="Saw J.H."/>
            <person name="Mountain B.W."/>
            <person name="Feng L."/>
            <person name="Omelchenko M.V."/>
            <person name="Hou S."/>
            <person name="Saito J.A."/>
            <person name="Stott M.B."/>
            <person name="Li D."/>
            <person name="Zhao G."/>
            <person name="Wu J."/>
            <person name="Galperin M.Y."/>
            <person name="Koonin E.V."/>
            <person name="Makarova K.S."/>
            <person name="Wolf Y.I."/>
            <person name="Rigden D.J."/>
            <person name="Dunfield P.F."/>
            <person name="Wang L."/>
            <person name="Alam M."/>
        </authorList>
    </citation>
    <scope>NUCLEOTIDE SEQUENCE [LARGE SCALE GENOMIC DNA]</scope>
    <source>
        <strain>DSM 21510 / WK1</strain>
    </source>
</reference>
<organism>
    <name type="scientific">Anoxybacillus flavithermus (strain DSM 21510 / WK1)</name>
    <dbReference type="NCBI Taxonomy" id="491915"/>
    <lineage>
        <taxon>Bacteria</taxon>
        <taxon>Bacillati</taxon>
        <taxon>Bacillota</taxon>
        <taxon>Bacilli</taxon>
        <taxon>Bacillales</taxon>
        <taxon>Anoxybacillaceae</taxon>
        <taxon>Anoxybacillus</taxon>
    </lineage>
</organism>
<sequence length="364" mass="39286">MSEIIHRSKTRPVRVGNITIGGNNEVVIQSMTTTKTHDVDATVAQIHRLEEAGCQIVRVACPDERAADAIAEIKKRINIPLVVDIHFDYRLALKAIENGADKIRINPGNIGKREKVEAVVKAAKERGVPIRIGVNAGSLEKRILDKYGYPTADGMVESALHHIRILEDLDFQDIIVSLKASDVRLAIEAYEKAARAFDYPLHLGITESGTLFAGTVKSAAGLGAILSKGIGNTVRVSLSADPVEEVKVARELLKAFGLAANAATLISCPTCGRIEIDLISIANEIEEYIAQIKAPIKVAVLGCAVNGPGEAREADIGIAGARGEGLLFRHGKIVRKVPEETMVEELKKEIDKLAEEYASKGKQK</sequence>
<name>ISPG_ANOFW</name>
<keyword id="KW-0004">4Fe-4S</keyword>
<keyword id="KW-0408">Iron</keyword>
<keyword id="KW-0411">Iron-sulfur</keyword>
<keyword id="KW-0414">Isoprene biosynthesis</keyword>
<keyword id="KW-0479">Metal-binding</keyword>
<keyword id="KW-0560">Oxidoreductase</keyword>
<protein>
    <recommendedName>
        <fullName evidence="1">4-hydroxy-3-methylbut-2-en-1-yl diphosphate synthase (flavodoxin)</fullName>
        <ecNumber evidence="1">1.17.7.3</ecNumber>
    </recommendedName>
    <alternativeName>
        <fullName evidence="1">1-hydroxy-2-methyl-2-(E)-butenyl 4-diphosphate synthase</fullName>
    </alternativeName>
</protein>
<evidence type="ECO:0000255" key="1">
    <source>
        <dbReference type="HAMAP-Rule" id="MF_00159"/>
    </source>
</evidence>